<evidence type="ECO:0000250" key="1">
    <source>
        <dbReference type="UniProtKB" id="Q17R60"/>
    </source>
</evidence>
<evidence type="ECO:0000250" key="2">
    <source>
        <dbReference type="UniProtKB" id="Q8JIR8"/>
    </source>
</evidence>
<evidence type="ECO:0000250" key="3">
    <source>
        <dbReference type="UniProtKB" id="Q8R1W8"/>
    </source>
</evidence>
<evidence type="ECO:0000255" key="4"/>
<evidence type="ECO:0000255" key="5">
    <source>
        <dbReference type="PROSITE-ProRule" id="PRU00188"/>
    </source>
</evidence>
<evidence type="ECO:0000256" key="6">
    <source>
        <dbReference type="SAM" id="MobiDB-lite"/>
    </source>
</evidence>
<evidence type="ECO:0000312" key="7">
    <source>
        <dbReference type="RGD" id="620499"/>
    </source>
</evidence>
<accession>Q9ET62</accession>
<organism>
    <name type="scientific">Rattus norvegicus</name>
    <name type="common">Rat</name>
    <dbReference type="NCBI Taxonomy" id="10116"/>
    <lineage>
        <taxon>Eukaryota</taxon>
        <taxon>Metazoa</taxon>
        <taxon>Chordata</taxon>
        <taxon>Craniata</taxon>
        <taxon>Vertebrata</taxon>
        <taxon>Euteleostomi</taxon>
        <taxon>Mammalia</taxon>
        <taxon>Eutheria</taxon>
        <taxon>Euarchontoglires</taxon>
        <taxon>Glires</taxon>
        <taxon>Rodentia</taxon>
        <taxon>Myomorpha</taxon>
        <taxon>Muroidea</taxon>
        <taxon>Muridae</taxon>
        <taxon>Murinae</taxon>
        <taxon>Rattus</taxon>
    </lineage>
</organism>
<proteinExistence type="evidence at transcript level"/>
<name>IMPG1_RAT</name>
<keyword id="KW-0966">Cell projection</keyword>
<keyword id="KW-0272">Extracellular matrix</keyword>
<keyword id="KW-0325">Glycoprotein</keyword>
<keyword id="KW-0358">Heparin-binding</keyword>
<keyword id="KW-0373">Hyaluronic acid</keyword>
<keyword id="KW-0675">Receptor</keyword>
<keyword id="KW-1185">Reference proteome</keyword>
<keyword id="KW-0677">Repeat</keyword>
<keyword id="KW-0964">Secreted</keyword>
<keyword id="KW-0730">Sialic acid</keyword>
<keyword id="KW-0732">Signal</keyword>
<feature type="signal peptide" evidence="4">
    <location>
        <begin position="1"/>
        <end position="20"/>
    </location>
</feature>
<feature type="chain" id="PRO_0000252240" description="Interphotoreceptor matrix proteoglycan 1" evidence="4">
    <location>
        <begin position="21"/>
        <end position="798"/>
    </location>
</feature>
<feature type="domain" description="SEA 1" evidence="5">
    <location>
        <begin position="238"/>
        <end position="360"/>
    </location>
</feature>
<feature type="domain" description="SEA 2" evidence="5">
    <location>
        <begin position="574"/>
        <end position="687"/>
    </location>
</feature>
<feature type="region of interest" description="Disordered" evidence="6">
    <location>
        <begin position="741"/>
        <end position="798"/>
    </location>
</feature>
<feature type="short sequence motif" description="Heparin- and hyaluronan-binding" evidence="2">
    <location>
        <begin position="624"/>
        <end position="632"/>
    </location>
</feature>
<feature type="compositionally biased region" description="Acidic residues" evidence="6">
    <location>
        <begin position="786"/>
        <end position="798"/>
    </location>
</feature>
<feature type="glycosylation site" description="N-linked (GlcNAc...) asparagine" evidence="4">
    <location>
        <position position="142"/>
    </location>
</feature>
<feature type="glycosylation site" description="O-linked (GalNAc...) threonine" evidence="4">
    <location>
        <position position="442"/>
    </location>
</feature>
<feature type="glycosylation site" description="O-linked (GalNAc...) threonine" evidence="4">
    <location>
        <position position="445"/>
    </location>
</feature>
<feature type="glycosylation site" description="N-linked (GlcNAc...) asparagine" evidence="4">
    <location>
        <position position="595"/>
    </location>
</feature>
<feature type="glycosylation site" description="N-linked (GlcNAc...) asparagine" evidence="4">
    <location>
        <position position="619"/>
    </location>
</feature>
<feature type="glycosylation site" description="N-linked (GlcNAc...) asparagine" evidence="4">
    <location>
        <position position="633"/>
    </location>
</feature>
<feature type="glycosylation site" description="N-linked (GlcNAc...) asparagine" evidence="4">
    <location>
        <position position="651"/>
    </location>
</feature>
<reference key="1">
    <citation type="journal article" date="2002" name="Ophthalmic Res.">
        <title>Mucin-like glycoprotein associated with photoreceptor cells in the postnatal developing rat retina.</title>
        <authorList>
            <person name="Uehara F."/>
            <person name="Ohba N."/>
            <person name="Ozawa M."/>
        </authorList>
    </citation>
    <scope>NUCLEOTIDE SEQUENCE [MRNA]</scope>
</reference>
<comment type="function">
    <text evidence="1 2">Chondroitin sulfate-, heparin- and hyaluronan-binding protein (By similarity). May serve to form a basic macromolecular scaffold comprising the insoluble interphotoreceptor matrix (By similarity).</text>
</comment>
<comment type="subcellular location">
    <subcellularLocation>
        <location evidence="1">Cell projection</location>
        <location evidence="1">Cilium</location>
        <location evidence="1">Photoreceptor outer segment</location>
    </subcellularLocation>
    <subcellularLocation>
        <location evidence="1">Secreted</location>
        <location evidence="1">Extracellular space</location>
        <location evidence="1">Extracellular matrix</location>
        <location evidence="1">Interphotoreceptor matrix</location>
    </subcellularLocation>
    <subcellularLocation>
        <location evidence="3">Photoreceptor inner segment</location>
    </subcellularLocation>
</comment>
<comment type="PTM">
    <text evidence="1">Highly glycosylated (N- and O-linked carbohydrates and sialic acid).</text>
</comment>
<gene>
    <name evidence="7" type="primary">Impg1</name>
    <name type="synonym">Mlgapc</name>
</gene>
<sequence length="798" mass="89950">MNLEIKHAILVLWIFLQVQGIKDTSTKTHSSGTKNIDKAPRIETTESTSAVHKASTMKRLFAVAKLRNKRSALFPAVNICPRESLRQILESLQEYYRLRVCQEIVWEAYRIFLDRVPDTEEYQDWVSLCQKETFCLFDIGKNFSNSQEHLDLLQQRIFQRSFSGRKDDMSPIEILGVPTTAPVLPIDVSSMSLRPFPLPPDDTDLKEVTIKDIQTPIAIRRAELESKPEPTHVTEISSEEKVEFSISLPNHRFKAELTNSRSPYYQELVGQSQLQLQKIFKKLPGFGEIRVLGFRPKKEEDGSSSTEIQLMAIFKRDHAESKGPESDLLSLDSNKIERERIHHGAIEDKQPEAYLTAADLKKLIIRLLDGDQPLVGGTVPFSDEVTEPLFRPVTQSELPKPLTDVTEDVTLSPELPFSEPRLESVDIYGPYLPDSSWSRPVTASTSGVGNLPSFTPSIFALDDQSSPPLMATGPTAFIPTLTLPISDYSTVRQWPLEVSHWPESSSDRELSTTSSHDTIRDLDEMDVSDTPALSEIAELSGYDSAPDRFLEMTTPIPTLQYVTXSSETIAAKGHELVVFFSLRVANMPFSYDLFNKSSLEYQALEQRFTDLLVPYLRSNLTGFKQLEILSFRNGSVIVNSKVRFAKAVPYNLTQAVRGVLEDLRSTAAQELNLEIESYSLDIEPADQADPCKFLDCGKFAQCIKNELTEEAECRCRQGHESHGTLEYQELNLCPPGKTCEASQGQATPCRPPDHSTNQARQPSVKKLQRQQNKVVKKRNSELSATDFEELDDQDWEGN</sequence>
<protein>
    <recommendedName>
        <fullName>Interphotoreceptor matrix proteoglycan 1</fullName>
    </recommendedName>
    <alternativeName>
        <fullName>Mucin-like glycoprotein associated with photoreceptor cells</fullName>
    </alternativeName>
    <alternativeName>
        <fullName>Sialoprotein associated with cones and rods</fullName>
    </alternativeName>
</protein>
<dbReference type="EMBL" id="AB047843">
    <property type="protein sequence ID" value="BAB12253.1"/>
    <property type="molecule type" value="mRNA"/>
</dbReference>
<dbReference type="RefSeq" id="NP_076448.1">
    <property type="nucleotide sequence ID" value="NM_023958.1"/>
</dbReference>
<dbReference type="FunCoup" id="Q9ET62">
    <property type="interactions" value="4"/>
</dbReference>
<dbReference type="STRING" id="10116.ENSRNOP00000017048"/>
<dbReference type="GlyCosmos" id="Q9ET62">
    <property type="glycosylation" value="7 sites, No reported glycans"/>
</dbReference>
<dbReference type="GlyGen" id="Q9ET62">
    <property type="glycosylation" value="7 sites"/>
</dbReference>
<dbReference type="PhosphoSitePlus" id="Q9ET62"/>
<dbReference type="PaxDb" id="10116-ENSRNOP00000017048"/>
<dbReference type="GeneID" id="66014"/>
<dbReference type="KEGG" id="rno:66014"/>
<dbReference type="UCSC" id="RGD:620499">
    <property type="organism name" value="rat"/>
</dbReference>
<dbReference type="AGR" id="RGD:620499"/>
<dbReference type="CTD" id="3617"/>
<dbReference type="RGD" id="620499">
    <property type="gene designation" value="Impg1"/>
</dbReference>
<dbReference type="eggNOG" id="ENOG502QTXX">
    <property type="taxonomic scope" value="Eukaryota"/>
</dbReference>
<dbReference type="InParanoid" id="Q9ET62"/>
<dbReference type="PhylomeDB" id="Q9ET62"/>
<dbReference type="PRO" id="PR:Q9ET62"/>
<dbReference type="Proteomes" id="UP000002494">
    <property type="component" value="Unplaced"/>
</dbReference>
<dbReference type="GO" id="GO:0005576">
    <property type="term" value="C:extracellular region"/>
    <property type="evidence" value="ECO:0007669"/>
    <property type="project" value="UniProtKB-KW"/>
</dbReference>
<dbReference type="GO" id="GO:0033165">
    <property type="term" value="C:interphotoreceptor matrix"/>
    <property type="evidence" value="ECO:0000266"/>
    <property type="project" value="RGD"/>
</dbReference>
<dbReference type="GO" id="GO:0001917">
    <property type="term" value="C:photoreceptor inner segment"/>
    <property type="evidence" value="ECO:0007669"/>
    <property type="project" value="UniProtKB-SubCell"/>
</dbReference>
<dbReference type="GO" id="GO:0001750">
    <property type="term" value="C:photoreceptor outer segment"/>
    <property type="evidence" value="ECO:0007669"/>
    <property type="project" value="UniProtKB-SubCell"/>
</dbReference>
<dbReference type="GO" id="GO:0035374">
    <property type="term" value="F:chondroitin sulfate binding"/>
    <property type="evidence" value="ECO:0000250"/>
    <property type="project" value="UniProtKB"/>
</dbReference>
<dbReference type="GO" id="GO:0008201">
    <property type="term" value="F:heparin binding"/>
    <property type="evidence" value="ECO:0000250"/>
    <property type="project" value="UniProtKB"/>
</dbReference>
<dbReference type="GO" id="GO:0005540">
    <property type="term" value="F:hyaluronic acid binding"/>
    <property type="evidence" value="ECO:0000250"/>
    <property type="project" value="UniProtKB"/>
</dbReference>
<dbReference type="GO" id="GO:0030198">
    <property type="term" value="P:extracellular matrix organization"/>
    <property type="evidence" value="ECO:0000266"/>
    <property type="project" value="RGD"/>
</dbReference>
<dbReference type="GO" id="GO:0007601">
    <property type="term" value="P:visual perception"/>
    <property type="evidence" value="ECO:0007669"/>
    <property type="project" value="InterPro"/>
</dbReference>
<dbReference type="InterPro" id="IPR039861">
    <property type="entry name" value="IMPG"/>
</dbReference>
<dbReference type="InterPro" id="IPR000082">
    <property type="entry name" value="SEA_dom"/>
</dbReference>
<dbReference type="InterPro" id="IPR036364">
    <property type="entry name" value="SEA_dom_sf"/>
</dbReference>
<dbReference type="PANTHER" id="PTHR12199">
    <property type="entry name" value="INTERPHOTORECEPTOR MATRIX PROTEOGLYCAN"/>
    <property type="match status" value="1"/>
</dbReference>
<dbReference type="PANTHER" id="PTHR12199:SF3">
    <property type="entry name" value="INTERPHOTORECEPTOR MATRIX PROTEOGLYCAN 1"/>
    <property type="match status" value="1"/>
</dbReference>
<dbReference type="Pfam" id="PF01390">
    <property type="entry name" value="SEA"/>
    <property type="match status" value="2"/>
</dbReference>
<dbReference type="SMART" id="SM00200">
    <property type="entry name" value="SEA"/>
    <property type="match status" value="2"/>
</dbReference>
<dbReference type="SUPFAM" id="SSF82671">
    <property type="entry name" value="SEA domain"/>
    <property type="match status" value="2"/>
</dbReference>
<dbReference type="PROSITE" id="PS50024">
    <property type="entry name" value="SEA"/>
    <property type="match status" value="2"/>
</dbReference>